<reference key="1">
    <citation type="submission" date="2006-03" db="EMBL/GenBank/DDBJ databases">
        <authorList>
            <consortium name="Sanger Xenopus tropicalis EST/cDNA project"/>
        </authorList>
    </citation>
    <scope>NUCLEOTIDE SEQUENCE [LARGE SCALE MRNA]</scope>
    <source>
        <tissue>Gastrula</tissue>
    </source>
</reference>
<reference key="2">
    <citation type="submission" date="2004-06" db="EMBL/GenBank/DDBJ databases">
        <authorList>
            <consortium name="NIH - Xenopus Gene Collection (XGC) project"/>
        </authorList>
    </citation>
    <scope>NUCLEOTIDE SEQUENCE [LARGE SCALE MRNA]</scope>
    <source>
        <tissue>Embryo</tissue>
    </source>
</reference>
<comment type="function">
    <text evidence="1">Probable core component of the endosomal sorting required for transport complex III (ESCRT-III) which is involved in multivesicular bodies (MVBs) formation and sorting of endosomal cargo proteins into MVBs. MVBs contain intraluminal vesicles (ILVs) that are generated by invagination and scission from the limiting membrane of the endosome and mostly are delivered to lysosomes enabling degradation of membrane proteins, such as stimulated growth factor receptors, lysosomal enzymes and lipids (By similarity).</text>
</comment>
<comment type="subunit">
    <text evidence="1">Probable core component of the endosomal sorting required for transport complex III (ESCRT-III). ESCRT-III components are thought to multimerize to form a flat lattice on the perimeter membrane of the endosome (By similarity).</text>
</comment>
<comment type="subcellular location">
    <subcellularLocation>
        <location evidence="1">Cytoplasm</location>
        <location evidence="1">Cytosol</location>
    </subcellularLocation>
    <subcellularLocation>
        <location evidence="1">Late endosome membrane</location>
        <topology evidence="1">Peripheral membrane protein</topology>
    </subcellularLocation>
    <subcellularLocation>
        <location evidence="1">Midbody</location>
    </subcellularLocation>
</comment>
<comment type="similarity">
    <text evidence="4">Belongs to the SNF7 family.</text>
</comment>
<organism>
    <name type="scientific">Xenopus tropicalis</name>
    <name type="common">Western clawed frog</name>
    <name type="synonym">Silurana tropicalis</name>
    <dbReference type="NCBI Taxonomy" id="8364"/>
    <lineage>
        <taxon>Eukaryota</taxon>
        <taxon>Metazoa</taxon>
        <taxon>Chordata</taxon>
        <taxon>Craniata</taxon>
        <taxon>Vertebrata</taxon>
        <taxon>Euteleostomi</taxon>
        <taxon>Amphibia</taxon>
        <taxon>Batrachia</taxon>
        <taxon>Anura</taxon>
        <taxon>Pipoidea</taxon>
        <taxon>Pipidae</taxon>
        <taxon>Xenopodinae</taxon>
        <taxon>Xenopus</taxon>
        <taxon>Silurana</taxon>
    </lineage>
</organism>
<name>CHM4B_XENTR</name>
<protein>
    <recommendedName>
        <fullName>Charged multivesicular body protein 4b</fullName>
    </recommendedName>
    <alternativeName>
        <fullName>Chromatin-modifying protein 4b</fullName>
        <shortName>CHMP4b</shortName>
    </alternativeName>
</protein>
<gene>
    <name type="primary">chmp4b</name>
    <name type="ORF">TGas124e08.1</name>
</gene>
<dbReference type="EMBL" id="CR762287">
    <property type="protein sequence ID" value="CAJ83591.1"/>
    <property type="molecule type" value="mRNA"/>
</dbReference>
<dbReference type="EMBL" id="BC074708">
    <property type="protein sequence ID" value="AAH74708.1"/>
    <property type="molecule type" value="mRNA"/>
</dbReference>
<dbReference type="RefSeq" id="NP_001004866.1">
    <property type="nucleotide sequence ID" value="NM_001004866.1"/>
</dbReference>
<dbReference type="SMR" id="Q6GL11"/>
<dbReference type="FunCoup" id="Q6GL11">
    <property type="interactions" value="2916"/>
</dbReference>
<dbReference type="STRING" id="8364.ENSXETP00000047084"/>
<dbReference type="PaxDb" id="8364-ENSXETP00000060482"/>
<dbReference type="DNASU" id="448169"/>
<dbReference type="GeneID" id="448169"/>
<dbReference type="KEGG" id="xtr:448169"/>
<dbReference type="AGR" id="Xenbase:XB-GENE-941865"/>
<dbReference type="CTD" id="128866"/>
<dbReference type="Xenbase" id="XB-GENE-941865">
    <property type="gene designation" value="chmp4b"/>
</dbReference>
<dbReference type="eggNOG" id="KOG1656">
    <property type="taxonomic scope" value="Eukaryota"/>
</dbReference>
<dbReference type="InParanoid" id="Q6GL11"/>
<dbReference type="OMA" id="RETHEML"/>
<dbReference type="OrthoDB" id="5592979at2759"/>
<dbReference type="Reactome" id="R-XTR-1632852">
    <property type="pathway name" value="Macroautophagy"/>
</dbReference>
<dbReference type="Reactome" id="R-XTR-917729">
    <property type="pathway name" value="Endosomal Sorting Complex Required For Transport (ESCRT)"/>
</dbReference>
<dbReference type="Reactome" id="R-XTR-9668328">
    <property type="pathway name" value="Sealing of the nuclear envelope (NE) by ESCRT-III"/>
</dbReference>
<dbReference type="Proteomes" id="UP000008143">
    <property type="component" value="Chromosome 10"/>
</dbReference>
<dbReference type="GO" id="GO:0005829">
    <property type="term" value="C:cytosol"/>
    <property type="evidence" value="ECO:0007669"/>
    <property type="project" value="UniProtKB-SubCell"/>
</dbReference>
<dbReference type="GO" id="GO:0000815">
    <property type="term" value="C:ESCRT III complex"/>
    <property type="evidence" value="ECO:0000250"/>
    <property type="project" value="UniProtKB"/>
</dbReference>
<dbReference type="GO" id="GO:0031902">
    <property type="term" value="C:late endosome membrane"/>
    <property type="evidence" value="ECO:0007669"/>
    <property type="project" value="UniProtKB-SubCell"/>
</dbReference>
<dbReference type="GO" id="GO:0030496">
    <property type="term" value="C:midbody"/>
    <property type="evidence" value="ECO:0007669"/>
    <property type="project" value="UniProtKB-SubCell"/>
</dbReference>
<dbReference type="GO" id="GO:0005635">
    <property type="term" value="C:nuclear envelope"/>
    <property type="evidence" value="ECO:0000250"/>
    <property type="project" value="UniProtKB"/>
</dbReference>
<dbReference type="GO" id="GO:0010458">
    <property type="term" value="P:exit from mitosis"/>
    <property type="evidence" value="ECO:0000250"/>
    <property type="project" value="UniProtKB"/>
</dbReference>
<dbReference type="GO" id="GO:0090148">
    <property type="term" value="P:membrane fission"/>
    <property type="evidence" value="ECO:0000250"/>
    <property type="project" value="UniProtKB"/>
</dbReference>
<dbReference type="GO" id="GO:0000281">
    <property type="term" value="P:mitotic cytokinesis"/>
    <property type="evidence" value="ECO:0000250"/>
    <property type="project" value="UniProtKB"/>
</dbReference>
<dbReference type="GO" id="GO:0031468">
    <property type="term" value="P:nuclear membrane reassembly"/>
    <property type="evidence" value="ECO:0000250"/>
    <property type="project" value="UniProtKB"/>
</dbReference>
<dbReference type="GO" id="GO:0015031">
    <property type="term" value="P:protein transport"/>
    <property type="evidence" value="ECO:0007669"/>
    <property type="project" value="UniProtKB-KW"/>
</dbReference>
<dbReference type="GO" id="GO:0007034">
    <property type="term" value="P:vacuolar transport"/>
    <property type="evidence" value="ECO:0007669"/>
    <property type="project" value="InterPro"/>
</dbReference>
<dbReference type="FunFam" id="1.10.287.1060:FF:000001">
    <property type="entry name" value="Charged multivesicular body protein 4b"/>
    <property type="match status" value="1"/>
</dbReference>
<dbReference type="Gene3D" id="6.10.250.1710">
    <property type="match status" value="1"/>
</dbReference>
<dbReference type="Gene3D" id="1.10.287.1060">
    <property type="entry name" value="ESAT-6-like"/>
    <property type="match status" value="1"/>
</dbReference>
<dbReference type="InterPro" id="IPR005024">
    <property type="entry name" value="Snf7_fam"/>
</dbReference>
<dbReference type="PANTHER" id="PTHR22761">
    <property type="entry name" value="CHARGED MULTIVESICULAR BODY PROTEIN"/>
    <property type="match status" value="1"/>
</dbReference>
<dbReference type="PANTHER" id="PTHR22761:SF4">
    <property type="entry name" value="CHARGED MULTIVESICULAR BODY PROTEIN 4B"/>
    <property type="match status" value="1"/>
</dbReference>
<dbReference type="Pfam" id="PF03357">
    <property type="entry name" value="Snf7"/>
    <property type="match status" value="1"/>
</dbReference>
<sequence>MSLIGKLFGTGGKGAKGPSPQEAIQKLRDTEEMLTKKQEFLEKKIEQELVTAKKHGTKNKRAALQALKRKKRYEKQLAQIDGTLSTIEFQREALENANTNTEVLKNMGFAAKAMKAAHDNMDIEKVDELMQDIADQQELAQEISDAISKPVGFGEDFDEDELMAELEELEQEELDKNLLEVQGPETVPLPNVPAAVLPAKPVKKKQEEDDDDMRELENWATA</sequence>
<proteinExistence type="evidence at transcript level"/>
<accession>Q6GL11</accession>
<accession>Q28EX8</accession>
<feature type="chain" id="PRO_0000211494" description="Charged multivesicular body protein 4b">
    <location>
        <begin position="1"/>
        <end position="222"/>
    </location>
</feature>
<feature type="region of interest" description="Disordered" evidence="3">
    <location>
        <begin position="1"/>
        <end position="21"/>
    </location>
</feature>
<feature type="region of interest" description="Disordered" evidence="3">
    <location>
        <begin position="183"/>
        <end position="222"/>
    </location>
</feature>
<feature type="coiled-coil region" evidence="2">
    <location>
        <begin position="21"/>
        <end position="182"/>
    </location>
</feature>
<feature type="compositionally biased region" description="Low complexity" evidence="3">
    <location>
        <begin position="188"/>
        <end position="200"/>
    </location>
</feature>
<keyword id="KW-0175">Coiled coil</keyword>
<keyword id="KW-0963">Cytoplasm</keyword>
<keyword id="KW-0967">Endosome</keyword>
<keyword id="KW-0472">Membrane</keyword>
<keyword id="KW-0653">Protein transport</keyword>
<keyword id="KW-1185">Reference proteome</keyword>
<keyword id="KW-0813">Transport</keyword>
<evidence type="ECO:0000250" key="1">
    <source>
        <dbReference type="UniProtKB" id="Q9H444"/>
    </source>
</evidence>
<evidence type="ECO:0000255" key="2"/>
<evidence type="ECO:0000256" key="3">
    <source>
        <dbReference type="SAM" id="MobiDB-lite"/>
    </source>
</evidence>
<evidence type="ECO:0000305" key="4"/>